<gene>
    <name type="primary">creA</name>
    <name type="ORF">AFUB_027530</name>
</gene>
<comment type="function">
    <text evidence="1">Transcription regulator component of the regulatory network controlling carbon source utilization through ubiquitination and deubiquitination involving creA, creB, creC, creD and acrB. Represses the transcription of the alcR, alcA and aldA genes by binding to a GC-rich region in their promoter. Also plays a role in response to carbon starvation and the control of extracellular proteases activity (By similarity).</text>
</comment>
<comment type="subunit">
    <text evidence="1">Interacts with creB.</text>
</comment>
<comment type="subcellular location">
    <subcellularLocation>
        <location evidence="1">Nucleus</location>
    </subcellularLocation>
</comment>
<comment type="PTM">
    <text evidence="1">Ubiquitinated. Deubiquitinated by creB, probably to control its activity or amount (By similarity).</text>
</comment>
<comment type="similarity">
    <text evidence="4">Belongs to the creA/MIG C2H2-type zinc-finger protein family.</text>
</comment>
<feature type="chain" id="PRO_0000395723" description="Probable DNA-binding protein creA">
    <location>
        <begin position="1"/>
        <end position="424"/>
    </location>
</feature>
<feature type="zinc finger region" description="C2H2-type 1" evidence="2">
    <location>
        <begin position="74"/>
        <end position="96"/>
    </location>
</feature>
<feature type="zinc finger region" description="C2H2-type 2" evidence="2">
    <location>
        <begin position="102"/>
        <end position="126"/>
    </location>
</feature>
<feature type="region of interest" description="Disordered" evidence="3">
    <location>
        <begin position="1"/>
        <end position="74"/>
    </location>
</feature>
<feature type="region of interest" description="Disordered" evidence="3">
    <location>
        <begin position="115"/>
        <end position="134"/>
    </location>
</feature>
<feature type="region of interest" description="Disordered" evidence="3">
    <location>
        <begin position="161"/>
        <end position="184"/>
    </location>
</feature>
<feature type="region of interest" description="Disordered" evidence="3">
    <location>
        <begin position="269"/>
        <end position="327"/>
    </location>
</feature>
<feature type="region of interest" description="Disordered" evidence="3">
    <location>
        <begin position="347"/>
        <end position="386"/>
    </location>
</feature>
<feature type="region of interest" description="Disordered" evidence="3">
    <location>
        <begin position="403"/>
        <end position="424"/>
    </location>
</feature>
<feature type="compositionally biased region" description="Low complexity" evidence="3">
    <location>
        <begin position="21"/>
        <end position="38"/>
    </location>
</feature>
<feature type="compositionally biased region" description="Polar residues" evidence="3">
    <location>
        <begin position="39"/>
        <end position="50"/>
    </location>
</feature>
<feature type="compositionally biased region" description="Basic and acidic residues" evidence="3">
    <location>
        <begin position="62"/>
        <end position="72"/>
    </location>
</feature>
<feature type="compositionally biased region" description="Low complexity" evidence="3">
    <location>
        <begin position="288"/>
        <end position="302"/>
    </location>
</feature>
<feature type="compositionally biased region" description="Low complexity" evidence="3">
    <location>
        <begin position="406"/>
        <end position="416"/>
    </location>
</feature>
<reference key="1">
    <citation type="journal article" date="2008" name="PLoS Genet.">
        <title>Genomic islands in the pathogenic filamentous fungus Aspergillus fumigatus.</title>
        <authorList>
            <person name="Fedorova N.D."/>
            <person name="Khaldi N."/>
            <person name="Joardar V.S."/>
            <person name="Maiti R."/>
            <person name="Amedeo P."/>
            <person name="Anderson M.J."/>
            <person name="Crabtree J."/>
            <person name="Silva J.C."/>
            <person name="Badger J.H."/>
            <person name="Albarraq A."/>
            <person name="Angiuoli S."/>
            <person name="Bussey H."/>
            <person name="Bowyer P."/>
            <person name="Cotty P.J."/>
            <person name="Dyer P.S."/>
            <person name="Egan A."/>
            <person name="Galens K."/>
            <person name="Fraser-Liggett C.M."/>
            <person name="Haas B.J."/>
            <person name="Inman J.M."/>
            <person name="Kent R."/>
            <person name="Lemieux S."/>
            <person name="Malavazi I."/>
            <person name="Orvis J."/>
            <person name="Roemer T."/>
            <person name="Ronning C.M."/>
            <person name="Sundaram J.P."/>
            <person name="Sutton G."/>
            <person name="Turner G."/>
            <person name="Venter J.C."/>
            <person name="White O.R."/>
            <person name="Whitty B.R."/>
            <person name="Youngman P."/>
            <person name="Wolfe K.H."/>
            <person name="Goldman G.H."/>
            <person name="Wortman J.R."/>
            <person name="Jiang B."/>
            <person name="Denning D.W."/>
            <person name="Nierman W.C."/>
        </authorList>
    </citation>
    <scope>NUCLEOTIDE SEQUENCE [LARGE SCALE GENOMIC DNA]</scope>
    <source>
        <strain>CBS 144.89 / FGSC A1163 / CEA10</strain>
    </source>
</reference>
<name>CREA_ASPFC</name>
<organism>
    <name type="scientific">Aspergillus fumigatus (strain CBS 144.89 / FGSC A1163 / CEA10)</name>
    <name type="common">Neosartorya fumigata</name>
    <dbReference type="NCBI Taxonomy" id="451804"/>
    <lineage>
        <taxon>Eukaryota</taxon>
        <taxon>Fungi</taxon>
        <taxon>Dikarya</taxon>
        <taxon>Ascomycota</taxon>
        <taxon>Pezizomycotina</taxon>
        <taxon>Eurotiomycetes</taxon>
        <taxon>Eurotiomycetidae</taxon>
        <taxon>Eurotiales</taxon>
        <taxon>Aspergillaceae</taxon>
        <taxon>Aspergillus</taxon>
        <taxon>Aspergillus subgen. Fumigati</taxon>
    </lineage>
</organism>
<proteinExistence type="inferred from homology"/>
<keyword id="KW-0238">DNA-binding</keyword>
<keyword id="KW-0479">Metal-binding</keyword>
<keyword id="KW-0539">Nucleus</keyword>
<keyword id="KW-0677">Repeat</keyword>
<keyword id="KW-0678">Repressor</keyword>
<keyword id="KW-0804">Transcription</keyword>
<keyword id="KW-0805">Transcription regulation</keyword>
<keyword id="KW-0832">Ubl conjugation</keyword>
<keyword id="KW-0862">Zinc</keyword>
<keyword id="KW-0863">Zinc-finger</keyword>
<accession>B0XSK6</accession>
<dbReference type="EMBL" id="DS499595">
    <property type="protein sequence ID" value="EDP54692.1"/>
    <property type="molecule type" value="Genomic_DNA"/>
</dbReference>
<dbReference type="SMR" id="B0XSK6"/>
<dbReference type="EnsemblFungi" id="EDP54692">
    <property type="protein sequence ID" value="EDP54692"/>
    <property type="gene ID" value="AFUB_027530"/>
</dbReference>
<dbReference type="VEuPathDB" id="FungiDB:AFUB_027530"/>
<dbReference type="HOGENOM" id="CLU_036230_0_0_1"/>
<dbReference type="OrthoDB" id="115256at5052"/>
<dbReference type="PhylomeDB" id="B0XSK6"/>
<dbReference type="PHI-base" id="PHI:123460"/>
<dbReference type="Proteomes" id="UP000001699">
    <property type="component" value="Unassembled WGS sequence"/>
</dbReference>
<dbReference type="GO" id="GO:0005737">
    <property type="term" value="C:cytoplasm"/>
    <property type="evidence" value="ECO:0007669"/>
    <property type="project" value="TreeGrafter"/>
</dbReference>
<dbReference type="GO" id="GO:0005634">
    <property type="term" value="C:nucleus"/>
    <property type="evidence" value="ECO:0007669"/>
    <property type="project" value="UniProtKB-SubCell"/>
</dbReference>
<dbReference type="GO" id="GO:0000978">
    <property type="term" value="F:RNA polymerase II cis-regulatory region sequence-specific DNA binding"/>
    <property type="evidence" value="ECO:0007669"/>
    <property type="project" value="TreeGrafter"/>
</dbReference>
<dbReference type="GO" id="GO:0008270">
    <property type="term" value="F:zinc ion binding"/>
    <property type="evidence" value="ECO:0007669"/>
    <property type="project" value="UniProtKB-KW"/>
</dbReference>
<dbReference type="GO" id="GO:0000433">
    <property type="term" value="P:carbon catabolite repression of transcription from RNA polymerase II promoter by glucose"/>
    <property type="evidence" value="ECO:0007669"/>
    <property type="project" value="TreeGrafter"/>
</dbReference>
<dbReference type="FunFam" id="3.30.160.60:FF:000089">
    <property type="entry name" value="DNA-binding protein creA"/>
    <property type="match status" value="1"/>
</dbReference>
<dbReference type="FunFam" id="3.30.160.60:FF:000152">
    <property type="entry name" value="DNA-binding protein creA"/>
    <property type="match status" value="1"/>
</dbReference>
<dbReference type="Gene3D" id="3.30.160.60">
    <property type="entry name" value="Classic Zinc Finger"/>
    <property type="match status" value="2"/>
</dbReference>
<dbReference type="InterPro" id="IPR051007">
    <property type="entry name" value="creA/MIG_C2H2-ZnF"/>
</dbReference>
<dbReference type="InterPro" id="IPR036236">
    <property type="entry name" value="Znf_C2H2_sf"/>
</dbReference>
<dbReference type="InterPro" id="IPR013087">
    <property type="entry name" value="Znf_C2H2_type"/>
</dbReference>
<dbReference type="PANTHER" id="PTHR47428">
    <property type="entry name" value="REGULATORY PROTEIN MIG1-RELATED"/>
    <property type="match status" value="1"/>
</dbReference>
<dbReference type="PANTHER" id="PTHR47428:SF1">
    <property type="entry name" value="REGULATORY PROTEIN MIG1-RELATED"/>
    <property type="match status" value="1"/>
</dbReference>
<dbReference type="Pfam" id="PF00096">
    <property type="entry name" value="zf-C2H2"/>
    <property type="match status" value="2"/>
</dbReference>
<dbReference type="SMART" id="SM00355">
    <property type="entry name" value="ZnF_C2H2"/>
    <property type="match status" value="2"/>
</dbReference>
<dbReference type="SUPFAM" id="SSF57667">
    <property type="entry name" value="beta-beta-alpha zinc fingers"/>
    <property type="match status" value="1"/>
</dbReference>
<dbReference type="PROSITE" id="PS00028">
    <property type="entry name" value="ZINC_FINGER_C2H2_1"/>
    <property type="match status" value="2"/>
</dbReference>
<dbReference type="PROSITE" id="PS50157">
    <property type="entry name" value="ZINC_FINGER_C2H2_2"/>
    <property type="match status" value="2"/>
</dbReference>
<evidence type="ECO:0000250" key="1"/>
<evidence type="ECO:0000255" key="2">
    <source>
        <dbReference type="PROSITE-ProRule" id="PRU00042"/>
    </source>
</evidence>
<evidence type="ECO:0000256" key="3">
    <source>
        <dbReference type="SAM" id="MobiDB-lite"/>
    </source>
</evidence>
<evidence type="ECO:0000305" key="4"/>
<sequence length="424" mass="45812">MPPPASSMGFSDLLNPQNPESTPSTPASKSSAPSTPSTEQSNSNMASSVSLLPPLMKGARPANEEPRQDLPRPYKCPLCDRAFHRLEHQTRHIRTHTGEKPHACQFPGCTKRFSRSDELTRHSRIHNNPNSRRNNKAQHLAAAAAAAAANQDNALASNAASMMPPPSKPITRSAPVSQVGSPDISPPHSFSNYAGHMRSNLGSYARNSDRASSGMDINLLATAASQVERDEHYGFHNGPRGHHIFGSRHHNNNRLPSLSAYAISQNMSRSYSHDEDDMYSHRVKRSRPNSPNSTAPSSPTFSHDSLSPTPDHTPLATPAHSPRLRPLGTSELQLPSIRHLSLHHTPALAPMEPQPEGPNYYSPTQPHVGPSISDIMSKPDGTQRKLPVPQVPKVAVQDLLSPGFTSVSSSASNSVAGGDLADRF</sequence>
<protein>
    <recommendedName>
        <fullName>Probable DNA-binding protein creA</fullName>
    </recommendedName>
    <alternativeName>
        <fullName>Carbon catabolite repressor A</fullName>
    </alternativeName>
</protein>